<organism evidence="6">
    <name type="scientific">Pinus banksiana</name>
    <name type="common">Jack pine</name>
    <name type="synonym">Pinus divaricata</name>
    <dbReference type="NCBI Taxonomy" id="3353"/>
    <lineage>
        <taxon>Eukaryota</taxon>
        <taxon>Viridiplantae</taxon>
        <taxon>Streptophyta</taxon>
        <taxon>Embryophyta</taxon>
        <taxon>Tracheophyta</taxon>
        <taxon>Spermatophyta</taxon>
        <taxon>Pinopsida</taxon>
        <taxon>Pinidae</taxon>
        <taxon>Conifers I</taxon>
        <taxon>Pinales</taxon>
        <taxon>Pinaceae</taxon>
        <taxon>Pinus</taxon>
        <taxon>Pinus subgen. Pinus</taxon>
    </lineage>
</organism>
<reference key="1">
    <citation type="journal article" date="2013" name="Plant Physiol.">
        <title>Evolution of conifer diterpene synthases: diterpene resin acid biosynthesis in lodgepole pine and jack pine involves monofunctional and bifunctional diterpene synthases.</title>
        <authorList>
            <person name="Hall D.E."/>
            <person name="Zerbe P."/>
            <person name="Jancsik S."/>
            <person name="Quesada A.L."/>
            <person name="Dullat H."/>
            <person name="Madilao L.L."/>
            <person name="Yuen M."/>
            <person name="Bohlmann J."/>
        </authorList>
    </citation>
    <scope>NUCLEOTIDE SEQUENCE [MRNA]</scope>
    <scope>FUNCTION</scope>
    <scope>CATALYTIC ACTIVITY</scope>
    <scope>3D-STRUCTURE MODELING</scope>
</reference>
<gene>
    <name evidence="4" type="primary">TPS-mISO1</name>
</gene>
<sequence>MAMPSYSSLSSHISITTTHTRPHPIFPCYYDTQSIPRFFISSDTGSSASKQRNIYLRLGSRKIIAGVGEGATSLSSHSDKMKTDSFPDPKLAKRDFPPGFWKDDIIDSIMSSNKVAAADEERVETLISEIKSMFRGMGDGETTPSAYDTAWVAKIPALDGSDHPHFPQTLQWILLNQLKDGSWGEEHHFLTYDRLLATLACIITLTVWRTGKTQVQKGIEFFKKHAGMMEDEADHRQPSGFEFVFPAMINEAKSLCLDLPYELPFIKQIIKKREAKLKRIPTDLLYTVPTIFLYYLEGLQEIVEWHKIIKLQSKDGSFLSSPASTAAVFMSTGNTKCLEFLNFVLMKFGNHAPCHYPIDLLERLWAVDTVQRLGIDRYFKEEIKEALDYIYSHWGERGIGWARENPVADIGVTAMGLRILRLNGYNVSSDVLRTFRDENGEFFSFMGQTERGVIDMLNLNRCSHVAFPGETVMEEAKHCTERYLWNALEDVDALDKWGLKKNIRGEVEYALKYPWLRSLPRLEARSYIENYGPNDAWLGKTMYIMPYINNGKYLELAKLDFNNVQSIHQKELRELRRWWKSSGFAELNFTRDRVAEIFFSIASSMFEPELATCRAVYTKSTICTVILDDLYDAHGSVEDIKLFNEAVKRWDLFLLDRMPEHIKICFLGLYNLVNEIAEEGRKRQGRDVLGYIRNLWEIQLETFMKEAEWSEAKYVPSFHEYIETASVSIAGATLVLFGVLFTGEVLTDHILSQIDYRSKFAYLMGLTGRLINDTKTYQAERGEGEVASAIQCYMKDHPEFSEEEALKQIYTLMENALADLKEEFLKAKDVPDKCKRLVFDYARSMQLFYQQGDGFTLAPNMEIKQHVKKILFEPVP</sequence>
<proteinExistence type="evidence at protein level"/>
<accession>M4HXW5</accession>
<evidence type="ECO:0000250" key="1">
    <source>
        <dbReference type="UniProtKB" id="Q40577"/>
    </source>
</evidence>
<evidence type="ECO:0000255" key="2"/>
<evidence type="ECO:0000269" key="3">
    <source>
    </source>
</evidence>
<evidence type="ECO:0000303" key="4">
    <source>
    </source>
</evidence>
<evidence type="ECO:0000305" key="5"/>
<evidence type="ECO:0000312" key="6">
    <source>
        <dbReference type="EMBL" id="AFU73865.1"/>
    </source>
</evidence>
<feature type="transit peptide" description="Chloroplast" evidence="2">
    <location>
        <begin position="1"/>
        <end position="64"/>
    </location>
</feature>
<feature type="chain" id="PRO_0000431412" description="Monofunctional isopimaradiene synthase, chloroplastic">
    <location>
        <begin position="65"/>
        <end position="876"/>
    </location>
</feature>
<feature type="short sequence motif" description="DDXXD motif" evidence="5">
    <location>
        <begin position="628"/>
        <end position="632"/>
    </location>
</feature>
<feature type="binding site" evidence="1">
    <location>
        <position position="628"/>
    </location>
    <ligand>
        <name>Mg(2+)</name>
        <dbReference type="ChEBI" id="CHEBI:18420"/>
        <label>1</label>
    </ligand>
</feature>
<feature type="binding site" evidence="1">
    <location>
        <position position="628"/>
    </location>
    <ligand>
        <name>Mg(2+)</name>
        <dbReference type="ChEBI" id="CHEBI:18420"/>
        <label>2</label>
    </ligand>
</feature>
<feature type="binding site" evidence="1">
    <location>
        <position position="632"/>
    </location>
    <ligand>
        <name>Mg(2+)</name>
        <dbReference type="ChEBI" id="CHEBI:18420"/>
        <label>1</label>
    </ligand>
</feature>
<feature type="binding site" evidence="1">
    <location>
        <position position="632"/>
    </location>
    <ligand>
        <name>Mg(2+)</name>
        <dbReference type="ChEBI" id="CHEBI:18420"/>
        <label>2</label>
    </ligand>
</feature>
<feature type="binding site" evidence="1">
    <location>
        <position position="772"/>
    </location>
    <ligand>
        <name>Mg(2+)</name>
        <dbReference type="ChEBI" id="CHEBI:18420"/>
        <label>3</label>
    </ligand>
</feature>
<feature type="binding site" evidence="1">
    <location>
        <position position="776"/>
    </location>
    <ligand>
        <name>Mg(2+)</name>
        <dbReference type="ChEBI" id="CHEBI:18420"/>
        <label>3</label>
    </ligand>
</feature>
<feature type="binding site" evidence="1">
    <location>
        <position position="780"/>
    </location>
    <ligand>
        <name>Mg(2+)</name>
        <dbReference type="ChEBI" id="CHEBI:18420"/>
        <label>3</label>
    </ligand>
</feature>
<keyword id="KW-0150">Chloroplast</keyword>
<keyword id="KW-0456">Lyase</keyword>
<keyword id="KW-0460">Magnesium</keyword>
<keyword id="KW-0479">Metal-binding</keyword>
<keyword id="KW-0611">Plant defense</keyword>
<keyword id="KW-0934">Plastid</keyword>
<keyword id="KW-0809">Transit peptide</keyword>
<comment type="function">
    <text evidence="3">Involved in defensive oleoresin formation in conifers in response to insect attack or other injury. Involved in diterpene (C20) olefins biosynthesis. Monofunctional enzyme lacking the DXDD motif in the class II active site relevant for the cyclization of geranylgeranyl diphosphate (GGPP). Requires (+)-copalyl diphosphate ((+)-CPP) as substrate, but no activity with GGPP or ent-CPP. Isopimaradiene is the major products of the enzyme followed by sandaracopimaradiene.</text>
</comment>
<comment type="catalytic activity">
    <reaction evidence="3">
        <text>(+)-copalyl diphosphate = isopimara-7,15-diene + diphosphate</text>
        <dbReference type="Rhea" id="RHEA:26128"/>
        <dbReference type="ChEBI" id="CHEBI:33019"/>
        <dbReference type="ChEBI" id="CHEBI:52280"/>
        <dbReference type="ChEBI" id="CHEBI:58635"/>
        <dbReference type="EC" id="4.2.3.44"/>
    </reaction>
</comment>
<comment type="cofactor">
    <cofactor evidence="1">
        <name>Mg(2+)</name>
        <dbReference type="ChEBI" id="CHEBI:18420"/>
    </cofactor>
    <text evidence="1">Binds 3 Mg(2+) ions per subunit.</text>
</comment>
<comment type="pathway">
    <text evidence="5">Terpene metabolism; oleoresin biosynthesis.</text>
</comment>
<comment type="subcellular location">
    <subcellularLocation>
        <location evidence="2">Plastid</location>
        <location evidence="2">Chloroplast</location>
    </subcellularLocation>
</comment>
<comment type="domain">
    <text evidence="5">The Asp-Asp-Xaa-Xaa-Asp/Glu (DDXXD/E) motif is important for the catalytic activity in the class I active site, presumably through binding to Mg(2+).</text>
</comment>
<comment type="similarity">
    <text evidence="5">Belongs to the terpene synthase family. Tpsd subfamily.</text>
</comment>
<dbReference type="EC" id="4.2.3.44" evidence="3"/>
<dbReference type="EMBL" id="JQ240313">
    <property type="protein sequence ID" value="AFU73865.1"/>
    <property type="molecule type" value="mRNA"/>
</dbReference>
<dbReference type="SMR" id="M4HXW5"/>
<dbReference type="BRENDA" id="4.2.3.B25">
    <property type="organism ID" value="4842"/>
</dbReference>
<dbReference type="UniPathway" id="UPA00924"/>
<dbReference type="GO" id="GO:0009507">
    <property type="term" value="C:chloroplast"/>
    <property type="evidence" value="ECO:0007669"/>
    <property type="project" value="UniProtKB-SubCell"/>
</dbReference>
<dbReference type="GO" id="GO:0000287">
    <property type="term" value="F:magnesium ion binding"/>
    <property type="evidence" value="ECO:0007669"/>
    <property type="project" value="InterPro"/>
</dbReference>
<dbReference type="GO" id="GO:0010333">
    <property type="term" value="F:terpene synthase activity"/>
    <property type="evidence" value="ECO:0007669"/>
    <property type="project" value="InterPro"/>
</dbReference>
<dbReference type="GO" id="GO:0006952">
    <property type="term" value="P:defense response"/>
    <property type="evidence" value="ECO:0007669"/>
    <property type="project" value="UniProtKB-KW"/>
</dbReference>
<dbReference type="GO" id="GO:0016102">
    <property type="term" value="P:diterpenoid biosynthetic process"/>
    <property type="evidence" value="ECO:0007669"/>
    <property type="project" value="InterPro"/>
</dbReference>
<dbReference type="CDD" id="cd00684">
    <property type="entry name" value="Terpene_cyclase_plant_C1"/>
    <property type="match status" value="1"/>
</dbReference>
<dbReference type="FunFam" id="1.50.10.130:FF:000002">
    <property type="entry name" value="Ent-copalyl diphosphate synthase, chloroplastic"/>
    <property type="match status" value="1"/>
</dbReference>
<dbReference type="FunFam" id="1.10.600.10:FF:000005">
    <property type="entry name" value="Ent-kaur-16-ene synthase, chloroplastic"/>
    <property type="match status" value="1"/>
</dbReference>
<dbReference type="Gene3D" id="1.50.10.160">
    <property type="match status" value="1"/>
</dbReference>
<dbReference type="Gene3D" id="1.10.600.10">
    <property type="entry name" value="Farnesyl Diphosphate Synthase"/>
    <property type="match status" value="1"/>
</dbReference>
<dbReference type="Gene3D" id="1.50.10.130">
    <property type="entry name" value="Terpene synthase, N-terminal domain"/>
    <property type="match status" value="1"/>
</dbReference>
<dbReference type="InterPro" id="IPR008949">
    <property type="entry name" value="Isoprenoid_synthase_dom_sf"/>
</dbReference>
<dbReference type="InterPro" id="IPR034741">
    <property type="entry name" value="Terpene_cyclase-like_1_C"/>
</dbReference>
<dbReference type="InterPro" id="IPR044814">
    <property type="entry name" value="Terpene_cyclase_plant_C1"/>
</dbReference>
<dbReference type="InterPro" id="IPR001906">
    <property type="entry name" value="Terpene_synth_N"/>
</dbReference>
<dbReference type="InterPro" id="IPR036965">
    <property type="entry name" value="Terpene_synth_N_sf"/>
</dbReference>
<dbReference type="InterPro" id="IPR050148">
    <property type="entry name" value="Terpene_synthase-like"/>
</dbReference>
<dbReference type="InterPro" id="IPR005630">
    <property type="entry name" value="Terpene_synthase_metal-bd"/>
</dbReference>
<dbReference type="InterPro" id="IPR008930">
    <property type="entry name" value="Terpenoid_cyclase/PrenylTrfase"/>
</dbReference>
<dbReference type="PANTHER" id="PTHR31739:SF25">
    <property type="entry name" value="(E,E)-GERANYLLINALOOL SYNTHASE"/>
    <property type="match status" value="1"/>
</dbReference>
<dbReference type="PANTHER" id="PTHR31739">
    <property type="entry name" value="ENT-COPALYL DIPHOSPHATE SYNTHASE, CHLOROPLASTIC"/>
    <property type="match status" value="1"/>
</dbReference>
<dbReference type="Pfam" id="PF01397">
    <property type="entry name" value="Terpene_synth"/>
    <property type="match status" value="1"/>
</dbReference>
<dbReference type="Pfam" id="PF03936">
    <property type="entry name" value="Terpene_synth_C"/>
    <property type="match status" value="1"/>
</dbReference>
<dbReference type="SFLD" id="SFLDS00005">
    <property type="entry name" value="Isoprenoid_Synthase_Type_I"/>
    <property type="match status" value="1"/>
</dbReference>
<dbReference type="SFLD" id="SFLDG01019">
    <property type="entry name" value="Terpene_Cyclase_Like_1_C_Termi"/>
    <property type="match status" value="1"/>
</dbReference>
<dbReference type="SFLD" id="SFLDG01014">
    <property type="entry name" value="Terpene_Cyclase_Like_1_N-term"/>
    <property type="match status" value="1"/>
</dbReference>
<dbReference type="SUPFAM" id="SSF48239">
    <property type="entry name" value="Terpenoid cyclases/Protein prenyltransferases"/>
    <property type="match status" value="2"/>
</dbReference>
<dbReference type="SUPFAM" id="SSF48576">
    <property type="entry name" value="Terpenoid synthases"/>
    <property type="match status" value="1"/>
</dbReference>
<protein>
    <recommendedName>
        <fullName evidence="4">Monofunctional isopimaradiene synthase, chloroplastic</fullName>
        <shortName evidence="4">PbmIso1</shortName>
        <ecNumber evidence="3">4.2.3.44</ecNumber>
    </recommendedName>
</protein>
<name>MISO1_PINBN</name>